<comment type="function">
    <text evidence="1">NDH shuttles electrons from NAD(P)H:plastoquinone, via FMN and iron-sulfur (Fe-S) centers, to quinones in the photosynthetic chain and possibly in a chloroplast respiratory chain. The immediate electron acceptor for the enzyme in this species is believed to be plastoquinone. Couples the redox reaction to proton translocation, and thus conserves the redox energy in a proton gradient.</text>
</comment>
<comment type="catalytic activity">
    <reaction evidence="1">
        <text>a plastoquinone + NADH + (n+1) H(+)(in) = a plastoquinol + NAD(+) + n H(+)(out)</text>
        <dbReference type="Rhea" id="RHEA:42608"/>
        <dbReference type="Rhea" id="RHEA-COMP:9561"/>
        <dbReference type="Rhea" id="RHEA-COMP:9562"/>
        <dbReference type="ChEBI" id="CHEBI:15378"/>
        <dbReference type="ChEBI" id="CHEBI:17757"/>
        <dbReference type="ChEBI" id="CHEBI:57540"/>
        <dbReference type="ChEBI" id="CHEBI:57945"/>
        <dbReference type="ChEBI" id="CHEBI:62192"/>
    </reaction>
</comment>
<comment type="catalytic activity">
    <reaction evidence="1">
        <text>a plastoquinone + NADPH + (n+1) H(+)(in) = a plastoquinol + NADP(+) + n H(+)(out)</text>
        <dbReference type="Rhea" id="RHEA:42612"/>
        <dbReference type="Rhea" id="RHEA-COMP:9561"/>
        <dbReference type="Rhea" id="RHEA-COMP:9562"/>
        <dbReference type="ChEBI" id="CHEBI:15378"/>
        <dbReference type="ChEBI" id="CHEBI:17757"/>
        <dbReference type="ChEBI" id="CHEBI:57783"/>
        <dbReference type="ChEBI" id="CHEBI:58349"/>
        <dbReference type="ChEBI" id="CHEBI:62192"/>
    </reaction>
</comment>
<comment type="cofactor">
    <cofactor evidence="1">
        <name>[4Fe-4S] cluster</name>
        <dbReference type="ChEBI" id="CHEBI:49883"/>
    </cofactor>
    <text evidence="1">Binds 1 [4Fe-4S] cluster.</text>
</comment>
<comment type="subunit">
    <text evidence="1">NDH is composed of at least 16 different subunits, 5 of which are encoded in the nucleus.</text>
</comment>
<comment type="subcellular location">
    <subcellularLocation>
        <location evidence="1">Plastid</location>
        <location evidence="1">Chloroplast thylakoid membrane</location>
        <topology evidence="1">Peripheral membrane protein</topology>
        <orientation evidence="1">Stromal side</orientation>
    </subcellularLocation>
</comment>
<comment type="similarity">
    <text evidence="1">Belongs to the complex I 20 kDa subunit family.</text>
</comment>
<proteinExistence type="inferred from homology"/>
<gene>
    <name evidence="1" type="primary">ndhK</name>
</gene>
<organism>
    <name type="scientific">Capsella bursa-pastoris</name>
    <name type="common">Shepherd's purse</name>
    <name type="synonym">Thlaspi bursa-pastoris</name>
    <dbReference type="NCBI Taxonomy" id="3719"/>
    <lineage>
        <taxon>Eukaryota</taxon>
        <taxon>Viridiplantae</taxon>
        <taxon>Streptophyta</taxon>
        <taxon>Embryophyta</taxon>
        <taxon>Tracheophyta</taxon>
        <taxon>Spermatophyta</taxon>
        <taxon>Magnoliopsida</taxon>
        <taxon>eudicotyledons</taxon>
        <taxon>Gunneridae</taxon>
        <taxon>Pentapetalae</taxon>
        <taxon>rosids</taxon>
        <taxon>malvids</taxon>
        <taxon>Brassicales</taxon>
        <taxon>Brassicaceae</taxon>
        <taxon>Camelineae</taxon>
        <taxon>Capsella</taxon>
    </lineage>
</organism>
<reference key="1">
    <citation type="submission" date="2007-03" db="EMBL/GenBank/DDBJ databases">
        <title>Sequencing analysis of Capsella bursa-pastoris JO22 chloroplast DNA.</title>
        <authorList>
            <person name="Hosouchi T."/>
            <person name="Tsuruoka H."/>
            <person name="Kotani H."/>
        </authorList>
    </citation>
    <scope>NUCLEOTIDE SEQUENCE [LARGE SCALE GENOMIC DNA]</scope>
</reference>
<name>NDHK_CAPBU</name>
<protein>
    <recommendedName>
        <fullName evidence="1">NAD(P)H-quinone oxidoreductase subunit K, chloroplastic</fullName>
        <ecNumber evidence="1">7.1.1.-</ecNumber>
    </recommendedName>
    <alternativeName>
        <fullName evidence="1">NAD(P)H dehydrogenase subunit K</fullName>
    </alternativeName>
    <alternativeName>
        <fullName evidence="1">NADH-plastoquinone oxidoreductase subunit K</fullName>
    </alternativeName>
</protein>
<feature type="chain" id="PRO_0000358526" description="NAD(P)H-quinone oxidoreductase subunit K, chloroplastic">
    <location>
        <begin position="1"/>
        <end position="225"/>
    </location>
</feature>
<feature type="binding site" evidence="1">
    <location>
        <position position="43"/>
    </location>
    <ligand>
        <name>[4Fe-4S] cluster</name>
        <dbReference type="ChEBI" id="CHEBI:49883"/>
    </ligand>
</feature>
<feature type="binding site" evidence="1">
    <location>
        <position position="44"/>
    </location>
    <ligand>
        <name>[4Fe-4S] cluster</name>
        <dbReference type="ChEBI" id="CHEBI:49883"/>
    </ligand>
</feature>
<feature type="binding site" evidence="1">
    <location>
        <position position="108"/>
    </location>
    <ligand>
        <name>[4Fe-4S] cluster</name>
        <dbReference type="ChEBI" id="CHEBI:49883"/>
    </ligand>
</feature>
<feature type="binding site" evidence="1">
    <location>
        <position position="139"/>
    </location>
    <ligand>
        <name>[4Fe-4S] cluster</name>
        <dbReference type="ChEBI" id="CHEBI:49883"/>
    </ligand>
</feature>
<sequence length="225" mass="25368">MNSIKFPVLDRTTKNSVISTTLNDLSNWTRLSSLWPLLYGTSCCFIEFASLIGSRFDFDRYGLVPRSSPRQADLILTAGTVTMKMAPSLVRLYEQMPEPKYVIAMGACTITGGMFSTDSYSTVRGVDKLIPVDVYLPGCPPKPEAVIDAITKLRKKIAREIYKDRIRPQQGNRCFTTNHKFFIVRSPHTGNYDQELLYPPSSTSEISTETFFKYKSPVSSHELVN</sequence>
<geneLocation type="chloroplast"/>
<dbReference type="EC" id="7.1.1.-" evidence="1"/>
<dbReference type="EMBL" id="AP009371">
    <property type="protein sequence ID" value="BAF50201.1"/>
    <property type="molecule type" value="Genomic_DNA"/>
</dbReference>
<dbReference type="RefSeq" id="YP_001123377.1">
    <property type="nucleotide sequence ID" value="NC_009270.1"/>
</dbReference>
<dbReference type="SMR" id="A4QKJ6"/>
<dbReference type="GeneID" id="4961714"/>
<dbReference type="GO" id="GO:0009535">
    <property type="term" value="C:chloroplast thylakoid membrane"/>
    <property type="evidence" value="ECO:0007669"/>
    <property type="project" value="UniProtKB-SubCell"/>
</dbReference>
<dbReference type="GO" id="GO:0045271">
    <property type="term" value="C:respiratory chain complex I"/>
    <property type="evidence" value="ECO:0007669"/>
    <property type="project" value="TreeGrafter"/>
</dbReference>
<dbReference type="GO" id="GO:0051539">
    <property type="term" value="F:4 iron, 4 sulfur cluster binding"/>
    <property type="evidence" value="ECO:0007669"/>
    <property type="project" value="UniProtKB-KW"/>
</dbReference>
<dbReference type="GO" id="GO:0005506">
    <property type="term" value="F:iron ion binding"/>
    <property type="evidence" value="ECO:0007669"/>
    <property type="project" value="UniProtKB-UniRule"/>
</dbReference>
<dbReference type="GO" id="GO:0008137">
    <property type="term" value="F:NADH dehydrogenase (ubiquinone) activity"/>
    <property type="evidence" value="ECO:0007669"/>
    <property type="project" value="InterPro"/>
</dbReference>
<dbReference type="GO" id="GO:0048038">
    <property type="term" value="F:quinone binding"/>
    <property type="evidence" value="ECO:0007669"/>
    <property type="project" value="UniProtKB-KW"/>
</dbReference>
<dbReference type="GO" id="GO:0009060">
    <property type="term" value="P:aerobic respiration"/>
    <property type="evidence" value="ECO:0007669"/>
    <property type="project" value="TreeGrafter"/>
</dbReference>
<dbReference type="GO" id="GO:0015990">
    <property type="term" value="P:electron transport coupled proton transport"/>
    <property type="evidence" value="ECO:0007669"/>
    <property type="project" value="TreeGrafter"/>
</dbReference>
<dbReference type="GO" id="GO:0019684">
    <property type="term" value="P:photosynthesis, light reaction"/>
    <property type="evidence" value="ECO:0007669"/>
    <property type="project" value="UniProtKB-UniRule"/>
</dbReference>
<dbReference type="FunFam" id="3.40.50.12280:FF:000003">
    <property type="entry name" value="NAD(P)H-quinone oxidoreductase subunit K, chloroplastic"/>
    <property type="match status" value="1"/>
</dbReference>
<dbReference type="Gene3D" id="3.40.50.12280">
    <property type="match status" value="1"/>
</dbReference>
<dbReference type="HAMAP" id="MF_01356">
    <property type="entry name" value="NDH1_NuoB"/>
    <property type="match status" value="1"/>
</dbReference>
<dbReference type="InterPro" id="IPR006137">
    <property type="entry name" value="NADH_UbQ_OxRdtase-like_20kDa"/>
</dbReference>
<dbReference type="InterPro" id="IPR006138">
    <property type="entry name" value="NADH_UQ_OxRdtase_20Kd_su"/>
</dbReference>
<dbReference type="NCBIfam" id="TIGR01957">
    <property type="entry name" value="nuoB_fam"/>
    <property type="match status" value="1"/>
</dbReference>
<dbReference type="NCBIfam" id="NF005012">
    <property type="entry name" value="PRK06411.1"/>
    <property type="match status" value="1"/>
</dbReference>
<dbReference type="PANTHER" id="PTHR11995">
    <property type="entry name" value="NADH DEHYDROGENASE"/>
    <property type="match status" value="1"/>
</dbReference>
<dbReference type="PANTHER" id="PTHR11995:SF14">
    <property type="entry name" value="NADH DEHYDROGENASE [UBIQUINONE] IRON-SULFUR PROTEIN 7, MITOCHONDRIAL"/>
    <property type="match status" value="1"/>
</dbReference>
<dbReference type="Pfam" id="PF01058">
    <property type="entry name" value="Oxidored_q6"/>
    <property type="match status" value="1"/>
</dbReference>
<dbReference type="SUPFAM" id="SSF56770">
    <property type="entry name" value="HydA/Nqo6-like"/>
    <property type="match status" value="1"/>
</dbReference>
<dbReference type="PROSITE" id="PS01150">
    <property type="entry name" value="COMPLEX1_20K"/>
    <property type="match status" value="1"/>
</dbReference>
<keyword id="KW-0004">4Fe-4S</keyword>
<keyword id="KW-0150">Chloroplast</keyword>
<keyword id="KW-0408">Iron</keyword>
<keyword id="KW-0411">Iron-sulfur</keyword>
<keyword id="KW-0472">Membrane</keyword>
<keyword id="KW-0479">Metal-binding</keyword>
<keyword id="KW-0520">NAD</keyword>
<keyword id="KW-0521">NADP</keyword>
<keyword id="KW-0934">Plastid</keyword>
<keyword id="KW-0618">Plastoquinone</keyword>
<keyword id="KW-0874">Quinone</keyword>
<keyword id="KW-0793">Thylakoid</keyword>
<keyword id="KW-1278">Translocase</keyword>
<keyword id="KW-0813">Transport</keyword>
<accession>A4QKJ6</accession>
<evidence type="ECO:0000255" key="1">
    <source>
        <dbReference type="HAMAP-Rule" id="MF_01356"/>
    </source>
</evidence>